<keyword id="KW-0025">Alternative splicing</keyword>
<keyword id="KW-0050">Antiport</keyword>
<keyword id="KW-0067">ATP-binding</keyword>
<keyword id="KW-0129">CBS domain</keyword>
<keyword id="KW-1003">Cell membrane</keyword>
<keyword id="KW-0868">Chloride</keyword>
<keyword id="KW-0967">Endosome</keyword>
<keyword id="KW-0333">Golgi apparatus</keyword>
<keyword id="KW-0406">Ion transport</keyword>
<keyword id="KW-0472">Membrane</keyword>
<keyword id="KW-0547">Nucleotide-binding</keyword>
<keyword id="KW-1185">Reference proteome</keyword>
<keyword id="KW-0677">Repeat</keyword>
<keyword id="KW-0812">Transmembrane</keyword>
<keyword id="KW-1133">Transmembrane helix</keyword>
<keyword id="KW-0813">Transport</keyword>
<keyword id="KW-0832">Ubl conjugation</keyword>
<feature type="chain" id="PRO_0000094447" description="H(+)/Cl(-) exchange transporter 5">
    <location>
        <begin position="1"/>
        <end position="816"/>
    </location>
</feature>
<feature type="topological domain" description="Cytoplasmic" evidence="1">
    <location>
        <begin position="1"/>
        <end position="124"/>
    </location>
</feature>
<feature type="transmembrane region" description="Helical" evidence="1">
    <location>
        <begin position="125"/>
        <end position="162"/>
    </location>
</feature>
<feature type="transmembrane region" description="Helical" evidence="1">
    <location>
        <begin position="208"/>
        <end position="231"/>
    </location>
</feature>
<feature type="intramembrane region" description="Helical" evidence="1">
    <location>
        <begin position="240"/>
        <end position="247"/>
    </location>
</feature>
<feature type="transmembrane region" description="Helical" evidence="1">
    <location>
        <begin position="256"/>
        <end position="275"/>
    </location>
</feature>
<feature type="transmembrane region" description="Helical" evidence="1">
    <location>
        <begin position="281"/>
        <end position="300"/>
    </location>
</feature>
<feature type="intramembrane region" description="Helical" evidence="1">
    <location>
        <begin position="312"/>
        <end position="324"/>
    </location>
</feature>
<feature type="intramembrane region" description="Helical" evidence="1">
    <location>
        <begin position="328"/>
        <end position="336"/>
    </location>
</feature>
<feature type="transmembrane region" description="Helical" evidence="1">
    <location>
        <begin position="348"/>
        <end position="366"/>
    </location>
</feature>
<feature type="transmembrane region" description="Helical" evidence="1">
    <location>
        <begin position="389"/>
        <end position="414"/>
    </location>
</feature>
<feature type="transmembrane region" description="Helical" evidence="1">
    <location>
        <begin position="422"/>
        <end position="442"/>
    </location>
</feature>
<feature type="transmembrane region" description="Helical" evidence="1">
    <location>
        <begin position="498"/>
        <end position="518"/>
    </location>
</feature>
<feature type="transmembrane region" description="Helical" evidence="1">
    <location>
        <begin position="523"/>
        <end position="542"/>
    </location>
</feature>
<feature type="intramembrane region" description="Helical" evidence="1">
    <location>
        <begin position="570"/>
        <end position="584"/>
    </location>
</feature>
<feature type="intramembrane region" description="Note=Loop between two helices" evidence="1">
    <location>
        <begin position="585"/>
        <end position="587"/>
    </location>
</feature>
<feature type="intramembrane region" description="Helical" evidence="1">
    <location>
        <begin position="588"/>
        <end position="599"/>
    </location>
</feature>
<feature type="intramembrane region" description="Note=Loop between two helices" evidence="1">
    <location>
        <begin position="600"/>
        <end position="604"/>
    </location>
</feature>
<feature type="transmembrane region" description="Helical" evidence="1">
    <location>
        <begin position="605"/>
        <end position="622"/>
    </location>
</feature>
<feature type="topological domain" description="Cytoplasmic" evidence="1">
    <location>
        <begin position="623"/>
        <end position="816"/>
    </location>
</feature>
<feature type="domain" description="CBS 1" evidence="3">
    <location>
        <begin position="656"/>
        <end position="720"/>
    </location>
</feature>
<feature type="domain" description="CBS 2" evidence="3">
    <location>
        <begin position="752"/>
        <end position="812"/>
    </location>
</feature>
<feature type="short sequence motif" description="Selectivity filter part_1" evidence="1">
    <location>
        <begin position="237"/>
        <end position="241"/>
    </location>
</feature>
<feature type="short sequence motif" description="Selectivity filter part_2" evidence="1">
    <location>
        <begin position="279"/>
        <end position="283"/>
    </location>
</feature>
<feature type="short sequence motif" description="Selectivity filter part_3" evidence="1">
    <location>
        <begin position="523"/>
        <end position="527"/>
    </location>
</feature>
<feature type="binding site" evidence="1">
    <location>
        <position position="238"/>
    </location>
    <ligand>
        <name>chloride</name>
        <dbReference type="ChEBI" id="CHEBI:17996"/>
    </ligand>
</feature>
<feature type="binding site" evidence="1">
    <location>
        <position position="525"/>
    </location>
    <ligand>
        <name>chloride</name>
        <dbReference type="ChEBI" id="CHEBI:17996"/>
    </ligand>
</feature>
<feature type="binding site" evidence="1">
    <location>
        <position position="628"/>
    </location>
    <ligand>
        <name>chloride</name>
        <dbReference type="ChEBI" id="CHEBI:17996"/>
    </ligand>
</feature>
<feature type="binding site" evidence="2">
    <location>
        <position position="666"/>
    </location>
    <ligand>
        <name>ATP</name>
        <dbReference type="ChEBI" id="CHEBI:30616"/>
    </ligand>
</feature>
<feature type="binding site" evidence="2">
    <location>
        <begin position="687"/>
        <end position="689"/>
    </location>
    <ligand>
        <name>ATP</name>
        <dbReference type="ChEBI" id="CHEBI:30616"/>
    </ligand>
</feature>
<feature type="binding site" evidence="2">
    <location>
        <begin position="794"/>
        <end position="797"/>
    </location>
    <ligand>
        <name>ATP</name>
        <dbReference type="ChEBI" id="CHEBI:30616"/>
    </ligand>
</feature>
<feature type="site" description="Mediates proton transfer from the outer aqueous phase to the interior of the protein; involved in linking H(+) and Cl(-) transport" evidence="1">
    <location>
        <position position="281"/>
    </location>
</feature>
<feature type="site" description="Mediates proton transfer from the protein to the inner aqueous phase" evidence="1">
    <location>
        <position position="338"/>
    </location>
</feature>
<feature type="splice variant" id="VSP_060655" description="In isoform 2." evidence="4">
    <location>
        <begin position="1"/>
        <end position="70"/>
    </location>
</feature>
<accession>Q9WVD4</accession>
<accession>B1ATV0</accession>
<accession>B1AXN0</accession>
<evidence type="ECO:0000250" key="1"/>
<evidence type="ECO:0000250" key="2">
    <source>
        <dbReference type="UniProtKB" id="P51795"/>
    </source>
</evidence>
<evidence type="ECO:0000255" key="3">
    <source>
        <dbReference type="PROSITE-ProRule" id="PRU00703"/>
    </source>
</evidence>
<evidence type="ECO:0000305" key="4"/>
<dbReference type="EMBL" id="AF134117">
    <property type="protein sequence ID" value="AAD28473.1"/>
    <property type="molecule type" value="mRNA"/>
</dbReference>
<dbReference type="EMBL" id="AL663104">
    <property type="status" value="NOT_ANNOTATED_CDS"/>
    <property type="molecule type" value="Genomic_DNA"/>
</dbReference>
<dbReference type="EMBL" id="AL808124">
    <property type="status" value="NOT_ANNOTATED_CDS"/>
    <property type="molecule type" value="Genomic_DNA"/>
</dbReference>
<dbReference type="EMBL" id="AL954858">
    <property type="status" value="NOT_ANNOTATED_CDS"/>
    <property type="molecule type" value="Genomic_DNA"/>
</dbReference>
<dbReference type="CCDS" id="CCDS29963.1">
    <molecule id="Q9WVD4-2"/>
</dbReference>
<dbReference type="CCDS" id="CCDS57727.1">
    <molecule id="Q9WVD4-1"/>
</dbReference>
<dbReference type="RefSeq" id="NP_001230691.1">
    <molecule id="Q9WVD4-1"/>
    <property type="nucleotide sequence ID" value="NM_001243762.1"/>
</dbReference>
<dbReference type="RefSeq" id="NP_057900.3">
    <molecule id="Q9WVD4-2"/>
    <property type="nucleotide sequence ID" value="NM_016691.4"/>
</dbReference>
<dbReference type="RefSeq" id="XP_036017696.1">
    <molecule id="Q9WVD4-1"/>
    <property type="nucleotide sequence ID" value="XM_036161803.1"/>
</dbReference>
<dbReference type="SMR" id="Q9WVD4"/>
<dbReference type="BioGRID" id="198738">
    <property type="interactions" value="4"/>
</dbReference>
<dbReference type="FunCoup" id="Q9WVD4">
    <property type="interactions" value="960"/>
</dbReference>
<dbReference type="IntAct" id="Q9WVD4">
    <property type="interactions" value="1"/>
</dbReference>
<dbReference type="STRING" id="10090.ENSMUSP00000111412"/>
<dbReference type="GlyGen" id="Q9WVD4">
    <property type="glycosylation" value="1 site, 1 N-linked glycan (1 site)"/>
</dbReference>
<dbReference type="iPTMnet" id="Q9WVD4"/>
<dbReference type="PhosphoSitePlus" id="Q9WVD4"/>
<dbReference type="jPOST" id="Q9WVD4"/>
<dbReference type="PaxDb" id="10090-ENSMUSP00000004428"/>
<dbReference type="ProteomicsDB" id="285480">
    <molecule id="Q9WVD4-1"/>
</dbReference>
<dbReference type="ProteomicsDB" id="351413"/>
<dbReference type="Pumba" id="Q9WVD4"/>
<dbReference type="ABCD" id="Q9WVD4">
    <property type="antibodies" value="2 sequenced antibodies"/>
</dbReference>
<dbReference type="Antibodypedia" id="396">
    <property type="antibodies" value="199 antibodies from 31 providers"/>
</dbReference>
<dbReference type="DNASU" id="12728"/>
<dbReference type="Ensembl" id="ENSMUST00000004428.14">
    <molecule id="Q9WVD4-2"/>
    <property type="protein sequence ID" value="ENSMUSP00000004428.8"/>
    <property type="gene ID" value="ENSMUSG00000004317.15"/>
</dbReference>
<dbReference type="Ensembl" id="ENSMUST00000115746.8">
    <molecule id="Q9WVD4-1"/>
    <property type="protein sequence ID" value="ENSMUSP00000111412.2"/>
    <property type="gene ID" value="ENSMUSG00000004317.15"/>
</dbReference>
<dbReference type="GeneID" id="12728"/>
<dbReference type="KEGG" id="mmu:12728"/>
<dbReference type="UCSC" id="uc009sle.3">
    <molecule id="Q9WVD4-1"/>
    <property type="organism name" value="mouse"/>
</dbReference>
<dbReference type="UCSC" id="uc029xhv.1">
    <property type="organism name" value="mouse"/>
</dbReference>
<dbReference type="AGR" id="MGI:99486"/>
<dbReference type="CTD" id="1184"/>
<dbReference type="MGI" id="MGI:99486">
    <property type="gene designation" value="Clcn5"/>
</dbReference>
<dbReference type="VEuPathDB" id="HostDB:ENSMUSG00000004317"/>
<dbReference type="eggNOG" id="KOG0475">
    <property type="taxonomic scope" value="Eukaryota"/>
</dbReference>
<dbReference type="GeneTree" id="ENSGT00940000153763"/>
<dbReference type="HOGENOM" id="CLU_003181_2_1_1"/>
<dbReference type="InParanoid" id="Q9WVD4"/>
<dbReference type="OMA" id="CLDWTPW"/>
<dbReference type="OrthoDB" id="44789at2759"/>
<dbReference type="PhylomeDB" id="Q9WVD4"/>
<dbReference type="TreeFam" id="TF313867"/>
<dbReference type="Reactome" id="R-MMU-2672351">
    <property type="pathway name" value="Stimuli-sensing channels"/>
</dbReference>
<dbReference type="BioGRID-ORCS" id="12728">
    <property type="hits" value="5 hits in 76 CRISPR screens"/>
</dbReference>
<dbReference type="ChiTaRS" id="Clcn5">
    <property type="organism name" value="mouse"/>
</dbReference>
<dbReference type="PRO" id="PR:Q9WVD4"/>
<dbReference type="Proteomes" id="UP000000589">
    <property type="component" value="Chromosome X"/>
</dbReference>
<dbReference type="RNAct" id="Q9WVD4">
    <property type="molecule type" value="protein"/>
</dbReference>
<dbReference type="Bgee" id="ENSMUSG00000004317">
    <property type="expression patterns" value="Expressed in internal carotid artery and 233 other cell types or tissues"/>
</dbReference>
<dbReference type="ExpressionAtlas" id="Q9WVD4">
    <property type="expression patterns" value="baseline and differential"/>
</dbReference>
<dbReference type="GO" id="GO:0045177">
    <property type="term" value="C:apical part of cell"/>
    <property type="evidence" value="ECO:0000314"/>
    <property type="project" value="UniProtKB"/>
</dbReference>
<dbReference type="GO" id="GO:0005829">
    <property type="term" value="C:cytosol"/>
    <property type="evidence" value="ECO:0007669"/>
    <property type="project" value="Ensembl"/>
</dbReference>
<dbReference type="GO" id="GO:0005768">
    <property type="term" value="C:endosome"/>
    <property type="evidence" value="ECO:0000314"/>
    <property type="project" value="MGI"/>
</dbReference>
<dbReference type="GO" id="GO:0010008">
    <property type="term" value="C:endosome membrane"/>
    <property type="evidence" value="ECO:0007669"/>
    <property type="project" value="UniProtKB-SubCell"/>
</dbReference>
<dbReference type="GO" id="GO:0000139">
    <property type="term" value="C:Golgi membrane"/>
    <property type="evidence" value="ECO:0007669"/>
    <property type="project" value="UniProtKB-SubCell"/>
</dbReference>
<dbReference type="GO" id="GO:0005886">
    <property type="term" value="C:plasma membrane"/>
    <property type="evidence" value="ECO:0007669"/>
    <property type="project" value="UniProtKB-SubCell"/>
</dbReference>
<dbReference type="GO" id="GO:0015297">
    <property type="term" value="F:antiporter activity"/>
    <property type="evidence" value="ECO:0007669"/>
    <property type="project" value="UniProtKB-KW"/>
</dbReference>
<dbReference type="GO" id="GO:0005524">
    <property type="term" value="F:ATP binding"/>
    <property type="evidence" value="ECO:0007669"/>
    <property type="project" value="UniProtKB-KW"/>
</dbReference>
<dbReference type="GO" id="GO:0005254">
    <property type="term" value="F:chloride channel activity"/>
    <property type="evidence" value="ECO:0000266"/>
    <property type="project" value="MGI"/>
</dbReference>
<dbReference type="GO" id="GO:0042802">
    <property type="term" value="F:identical protein binding"/>
    <property type="evidence" value="ECO:0007669"/>
    <property type="project" value="Ensembl"/>
</dbReference>
<dbReference type="GO" id="GO:0005247">
    <property type="term" value="F:voltage-gated chloride channel activity"/>
    <property type="evidence" value="ECO:0007669"/>
    <property type="project" value="Ensembl"/>
</dbReference>
<dbReference type="GO" id="GO:0006821">
    <property type="term" value="P:chloride transport"/>
    <property type="evidence" value="ECO:0000266"/>
    <property type="project" value="MGI"/>
</dbReference>
<dbReference type="GO" id="GO:0006897">
    <property type="term" value="P:endocytosis"/>
    <property type="evidence" value="ECO:0000315"/>
    <property type="project" value="MGI"/>
</dbReference>
<dbReference type="GO" id="GO:0003014">
    <property type="term" value="P:renal system process"/>
    <property type="evidence" value="ECO:0007669"/>
    <property type="project" value="Ensembl"/>
</dbReference>
<dbReference type="CDD" id="cd04591">
    <property type="entry name" value="CBS_pair_voltage-gated_CLC_euk_bac"/>
    <property type="match status" value="1"/>
</dbReference>
<dbReference type="CDD" id="cd03684">
    <property type="entry name" value="ClC_3_like"/>
    <property type="match status" value="1"/>
</dbReference>
<dbReference type="FunFam" id="3.10.580.20:FF:000001">
    <property type="entry name" value="Chloride channel protein"/>
    <property type="match status" value="1"/>
</dbReference>
<dbReference type="FunFam" id="3.90.1280.20:FF:000001">
    <property type="entry name" value="Chloride channel protein"/>
    <property type="match status" value="1"/>
</dbReference>
<dbReference type="FunFam" id="3.90.1280.20:FF:000003">
    <property type="entry name" value="Chloride channel protein"/>
    <property type="match status" value="1"/>
</dbReference>
<dbReference type="Gene3D" id="3.10.580.20">
    <property type="match status" value="1"/>
</dbReference>
<dbReference type="Gene3D" id="3.90.1280.20">
    <property type="match status" value="1"/>
</dbReference>
<dbReference type="Gene3D" id="1.10.3080.10">
    <property type="entry name" value="Clc chloride channel"/>
    <property type="match status" value="1"/>
</dbReference>
<dbReference type="InterPro" id="IPR000644">
    <property type="entry name" value="CBS_dom"/>
</dbReference>
<dbReference type="InterPro" id="IPR046342">
    <property type="entry name" value="CBS_dom_sf"/>
</dbReference>
<dbReference type="InterPro" id="IPR014743">
    <property type="entry name" value="Cl-channel_core"/>
</dbReference>
<dbReference type="InterPro" id="IPR002247">
    <property type="entry name" value="Cl_channel-5"/>
</dbReference>
<dbReference type="InterPro" id="IPR001807">
    <property type="entry name" value="ClC"/>
</dbReference>
<dbReference type="PANTHER" id="PTHR45711">
    <property type="entry name" value="CHLORIDE CHANNEL PROTEIN"/>
    <property type="match status" value="1"/>
</dbReference>
<dbReference type="PANTHER" id="PTHR45711:SF7">
    <property type="entry name" value="H(+)_CL(-) EXCHANGE TRANSPORTER 5"/>
    <property type="match status" value="1"/>
</dbReference>
<dbReference type="Pfam" id="PF00571">
    <property type="entry name" value="CBS"/>
    <property type="match status" value="2"/>
</dbReference>
<dbReference type="Pfam" id="PF00654">
    <property type="entry name" value="Voltage_CLC"/>
    <property type="match status" value="1"/>
</dbReference>
<dbReference type="PRINTS" id="PR00762">
    <property type="entry name" value="CLCHANNEL"/>
</dbReference>
<dbReference type="PRINTS" id="PR01116">
    <property type="entry name" value="CLCHANNEL5"/>
</dbReference>
<dbReference type="SMART" id="SM00116">
    <property type="entry name" value="CBS"/>
    <property type="match status" value="2"/>
</dbReference>
<dbReference type="SUPFAM" id="SSF54631">
    <property type="entry name" value="CBS-domain pair"/>
    <property type="match status" value="1"/>
</dbReference>
<dbReference type="SUPFAM" id="SSF81340">
    <property type="entry name" value="Clc chloride channel"/>
    <property type="match status" value="1"/>
</dbReference>
<dbReference type="PROSITE" id="PS51371">
    <property type="entry name" value="CBS"/>
    <property type="match status" value="2"/>
</dbReference>
<sequence>MAMWQGAMDNRGFHQGSFSSFQSSSSDEDLMDIPGTAMDFSMRDDVPPLDREIEGNKSYNGGGIGSSNRVMDFLEEPIPGVGTYDDFNTIDWVREKSRDRDRHREITNKSKESTWALIHSVSDAFSGWLLMLLIGLLSGSLAGLIDISAHWMTDLKEGICTGGFWFNHEHCCWNSEHVTFEHRDKCPEWNSWAQLIINTDQGAFAYIVNYFMYVLWALLFAFLAVSLVKAFAPYACGSGIPEIKTILSGFIIRGYLGKWTLVIKTITLVLAVSSGLSLGKEGPLVHVACCCGNILCHCFNKYRKNEAKRREVLSAAAAAGVSVAFGAPIGGVLFSLEEVSYYFPLKTLWRSFFAALVAAFTLRSINPFGNSRLVLFYVEFHTPWHLFELVPFIVLGIFGGLWGALFIRTNIAWCRKRKTTQLGKYPVVEVLIVTAITAILAFPNEYTRMSTSELISELFNDCGLLDSSKLCDYENHFNTSKGGELPDRPAGVGIYSAMWQLALTLILKIVITIFTFGMKIPSGLFIPSMAVGAIAGRLLGVGMEQLAYYHHDWGIFNSWCSQGADCITPGLYAMVGAAACLGGVTRMTVSLVVIMFELTGGLEYIVPLMAAAMTSKWVADALGREGIYDAHIRLNGYPFLEAKEEFAHKTLAMDVMKPRRNDPLLTVLTQDSMTVEDVETIISETTYSGFPVVVSRESQRLVGFVLRRDLIISIENARKKQDGVVSTSIIYFTEHSPPMPPYTPPTLKLRNILDLSPFTVTDLTPMEIVVDIFRKLGLRQCLVTHNGRLLGIITKKDVLKHIAQMANQDPDSILFN</sequence>
<reference key="1">
    <citation type="journal article" date="1999" name="Genomics">
        <title>Characterization of novel promoter and enhancer elements of the mouse homologue of the Dent disease gene, CLCN5, implicated in X-linked hereditary nephrolithiasis.</title>
        <authorList>
            <person name="Tanaka K."/>
            <person name="Fisher S.E."/>
            <person name="Craig I.W."/>
        </authorList>
    </citation>
    <scope>NUCLEOTIDE SEQUENCE [MRNA] (ISOFORM 2)</scope>
    <source>
        <tissue>Kidney</tissue>
    </source>
</reference>
<reference key="2">
    <citation type="journal article" date="2009" name="PLoS Biol.">
        <title>Lineage-specific biology revealed by a finished genome assembly of the mouse.</title>
        <authorList>
            <person name="Church D.M."/>
            <person name="Goodstadt L."/>
            <person name="Hillier L.W."/>
            <person name="Zody M.C."/>
            <person name="Goldstein S."/>
            <person name="She X."/>
            <person name="Bult C.J."/>
            <person name="Agarwala R."/>
            <person name="Cherry J.L."/>
            <person name="DiCuccio M."/>
            <person name="Hlavina W."/>
            <person name="Kapustin Y."/>
            <person name="Meric P."/>
            <person name="Maglott D."/>
            <person name="Birtle Z."/>
            <person name="Marques A.C."/>
            <person name="Graves T."/>
            <person name="Zhou S."/>
            <person name="Teague B."/>
            <person name="Potamousis K."/>
            <person name="Churas C."/>
            <person name="Place M."/>
            <person name="Herschleb J."/>
            <person name="Runnheim R."/>
            <person name="Forrest D."/>
            <person name="Amos-Landgraf J."/>
            <person name="Schwartz D.C."/>
            <person name="Cheng Z."/>
            <person name="Lindblad-Toh K."/>
            <person name="Eichler E.E."/>
            <person name="Ponting C.P."/>
        </authorList>
    </citation>
    <scope>NUCLEOTIDE SEQUENCE [LARGE SCALE GENOMIC DNA]</scope>
    <source>
        <strain>C57BL/6J</strain>
    </source>
</reference>
<reference key="3">
    <citation type="journal article" date="2010" name="Cell">
        <title>A tissue-specific atlas of mouse protein phosphorylation and expression.</title>
        <authorList>
            <person name="Huttlin E.L."/>
            <person name="Jedrychowski M.P."/>
            <person name="Elias J.E."/>
            <person name="Goswami T."/>
            <person name="Rad R."/>
            <person name="Beausoleil S.A."/>
            <person name="Villen J."/>
            <person name="Haas W."/>
            <person name="Sowa M.E."/>
            <person name="Gygi S.P."/>
        </authorList>
    </citation>
    <scope>IDENTIFICATION BY MASS SPECTROMETRY [LARGE SCALE ANALYSIS]</scope>
    <source>
        <tissue>Kidney</tissue>
    </source>
</reference>
<comment type="function">
    <text evidence="2 4">Proton-coupled chloride transporter. Functions as antiport system and exchanges chloride ions against protons. Important for normal acidification of the endosome lumen. May play an important role in renal tubular function (By similarity). The CLC channel family contains both chloride channels and proton-coupled anion transporters that exchange chloride or another anion for protons. The absence of conserved gating glutamate residues is typical for family members that function as channels (Probable).</text>
</comment>
<comment type="catalytic activity">
    <reaction evidence="2">
        <text>2 chloride(in) + H(+)(out) = 2 chloride(out) + H(+)(in)</text>
        <dbReference type="Rhea" id="RHEA:29567"/>
        <dbReference type="ChEBI" id="CHEBI:15378"/>
        <dbReference type="ChEBI" id="CHEBI:17996"/>
    </reaction>
</comment>
<comment type="subunit">
    <text evidence="2">Interacts with NEDD4 and NEDD4L.</text>
</comment>
<comment type="subcellular location">
    <subcellularLocation>
        <location evidence="2">Golgi apparatus membrane</location>
        <topology evidence="2">Multi-pass membrane protein</topology>
    </subcellularLocation>
    <subcellularLocation>
        <location evidence="2">Endosome membrane</location>
        <topology evidence="2">Multi-pass membrane protein</topology>
    </subcellularLocation>
    <subcellularLocation>
        <location evidence="2">Cell membrane</location>
        <topology evidence="2">Multi-pass membrane protein</topology>
    </subcellularLocation>
</comment>
<comment type="alternative products">
    <event type="alternative splicing"/>
    <isoform>
        <id>Q9WVD4-1</id>
        <name>1</name>
        <sequence type="displayed"/>
    </isoform>
    <isoform>
        <id>Q9WVD4-2</id>
        <name>2</name>
        <sequence type="described" ref="VSP_060655"/>
    </isoform>
</comment>
<comment type="tissue specificity">
    <text>Kidney specific.</text>
</comment>
<comment type="PTM">
    <text evidence="2">Ubiquitinated by NEDD4L in the presence of albumin; which promotes endocytosis and proteasomal degradation.</text>
</comment>
<comment type="similarity">
    <text evidence="4">Belongs to the chloride channel (TC 2.A.49) family. ClC-5/CLCN5 subfamily.</text>
</comment>
<organism>
    <name type="scientific">Mus musculus</name>
    <name type="common">Mouse</name>
    <dbReference type="NCBI Taxonomy" id="10090"/>
    <lineage>
        <taxon>Eukaryota</taxon>
        <taxon>Metazoa</taxon>
        <taxon>Chordata</taxon>
        <taxon>Craniata</taxon>
        <taxon>Vertebrata</taxon>
        <taxon>Euteleostomi</taxon>
        <taxon>Mammalia</taxon>
        <taxon>Eutheria</taxon>
        <taxon>Euarchontoglires</taxon>
        <taxon>Glires</taxon>
        <taxon>Rodentia</taxon>
        <taxon>Myomorpha</taxon>
        <taxon>Muroidea</taxon>
        <taxon>Muridae</taxon>
        <taxon>Murinae</taxon>
        <taxon>Mus</taxon>
        <taxon>Mus</taxon>
    </lineage>
</organism>
<proteinExistence type="evidence at protein level"/>
<gene>
    <name type="primary">Clcn5</name>
    <name type="synonym">Clc5</name>
</gene>
<name>CLCN5_MOUSE</name>
<protein>
    <recommendedName>
        <fullName>H(+)/Cl(-) exchange transporter 5</fullName>
    </recommendedName>
    <alternativeName>
        <fullName>Chloride channel protein 5</fullName>
        <shortName>ClC-5</shortName>
    </alternativeName>
    <alternativeName>
        <fullName>Chloride transporter ClC-5</fullName>
    </alternativeName>
</protein>